<evidence type="ECO:0000250" key="1"/>
<evidence type="ECO:0000250" key="2">
    <source>
        <dbReference type="UniProtKB" id="O88983"/>
    </source>
</evidence>
<evidence type="ECO:0000255" key="3"/>
<evidence type="ECO:0000255" key="4">
    <source>
        <dbReference type="PROSITE-ProRule" id="PRU00202"/>
    </source>
</evidence>
<evidence type="ECO:0000305" key="5"/>
<protein>
    <recommendedName>
        <fullName>Syntaxin-8</fullName>
    </recommendedName>
</protein>
<dbReference type="EMBL" id="AF115323">
    <property type="protein sequence ID" value="AAD20831.1"/>
    <property type="molecule type" value="mRNA"/>
</dbReference>
<dbReference type="EMBL" id="AF062077">
    <property type="protein sequence ID" value="AAC36466.1"/>
    <property type="molecule type" value="mRNA"/>
</dbReference>
<dbReference type="EMBL" id="AF036715">
    <property type="protein sequence ID" value="AAC95285.1"/>
    <property type="molecule type" value="mRNA"/>
</dbReference>
<dbReference type="EMBL" id="BT007319">
    <property type="protein sequence ID" value="AAP35983.1"/>
    <property type="molecule type" value="mRNA"/>
</dbReference>
<dbReference type="EMBL" id="CH471108">
    <property type="protein sequence ID" value="EAW90029.1"/>
    <property type="molecule type" value="Genomic_DNA"/>
</dbReference>
<dbReference type="EMBL" id="BC009713">
    <property type="protein sequence ID" value="AAH09713.1"/>
    <property type="molecule type" value="mRNA"/>
</dbReference>
<dbReference type="CCDS" id="CCDS32565.1"/>
<dbReference type="RefSeq" id="NP_004844.1">
    <property type="nucleotide sequence ID" value="NM_004853.3"/>
</dbReference>
<dbReference type="RefSeq" id="XP_054173811.1">
    <property type="nucleotide sequence ID" value="XM_054317836.1"/>
</dbReference>
<dbReference type="SMR" id="Q9UNK0"/>
<dbReference type="BioGRID" id="114867">
    <property type="interactions" value="235"/>
</dbReference>
<dbReference type="DIP" id="DIP-47274N"/>
<dbReference type="FunCoup" id="Q9UNK0">
    <property type="interactions" value="2307"/>
</dbReference>
<dbReference type="IntAct" id="Q9UNK0">
    <property type="interactions" value="187"/>
</dbReference>
<dbReference type="MINT" id="Q9UNK0"/>
<dbReference type="STRING" id="9606.ENSP00000305255"/>
<dbReference type="iPTMnet" id="Q9UNK0"/>
<dbReference type="PhosphoSitePlus" id="Q9UNK0"/>
<dbReference type="SwissPalm" id="Q9UNK0"/>
<dbReference type="BioMuta" id="STX8"/>
<dbReference type="DMDM" id="9297054"/>
<dbReference type="jPOST" id="Q9UNK0"/>
<dbReference type="MassIVE" id="Q9UNK0"/>
<dbReference type="PaxDb" id="9606-ENSP00000305255"/>
<dbReference type="PeptideAtlas" id="Q9UNK0"/>
<dbReference type="ProteomicsDB" id="85299"/>
<dbReference type="Pumba" id="Q9UNK0"/>
<dbReference type="Antibodypedia" id="726">
    <property type="antibodies" value="193 antibodies from 27 providers"/>
</dbReference>
<dbReference type="DNASU" id="9482"/>
<dbReference type="Ensembl" id="ENST00000306357.9">
    <property type="protein sequence ID" value="ENSP00000305255.2"/>
    <property type="gene ID" value="ENSG00000170310.15"/>
</dbReference>
<dbReference type="GeneID" id="9482"/>
<dbReference type="KEGG" id="hsa:9482"/>
<dbReference type="MANE-Select" id="ENST00000306357.9">
    <property type="protein sequence ID" value="ENSP00000305255.2"/>
    <property type="RefSeq nucleotide sequence ID" value="NM_004853.3"/>
    <property type="RefSeq protein sequence ID" value="NP_004844.1"/>
</dbReference>
<dbReference type="UCSC" id="uc002glx.4">
    <property type="organism name" value="human"/>
</dbReference>
<dbReference type="AGR" id="HGNC:11443"/>
<dbReference type="CTD" id="9482"/>
<dbReference type="DisGeNET" id="9482"/>
<dbReference type="GeneCards" id="STX8"/>
<dbReference type="HGNC" id="HGNC:11443">
    <property type="gene designation" value="STX8"/>
</dbReference>
<dbReference type="HPA" id="ENSG00000170310">
    <property type="expression patterns" value="Low tissue specificity"/>
</dbReference>
<dbReference type="MalaCards" id="STX8"/>
<dbReference type="MIM" id="604203">
    <property type="type" value="gene"/>
</dbReference>
<dbReference type="neXtProt" id="NX_Q9UNK0"/>
<dbReference type="OpenTargets" id="ENSG00000170310"/>
<dbReference type="PharmGKB" id="PA36240"/>
<dbReference type="VEuPathDB" id="HostDB:ENSG00000170310"/>
<dbReference type="eggNOG" id="KOG3202">
    <property type="taxonomic scope" value="Eukaryota"/>
</dbReference>
<dbReference type="GeneTree" id="ENSGT00390000007779"/>
<dbReference type="HOGENOM" id="CLU_099972_1_0_1"/>
<dbReference type="InParanoid" id="Q9UNK0"/>
<dbReference type="OMA" id="DSTCYIA"/>
<dbReference type="OrthoDB" id="428895at2759"/>
<dbReference type="PAN-GO" id="Q9UNK0">
    <property type="GO annotations" value="8 GO annotations based on evolutionary models"/>
</dbReference>
<dbReference type="PhylomeDB" id="Q9UNK0"/>
<dbReference type="TreeFam" id="TF323262"/>
<dbReference type="PathwayCommons" id="Q9UNK0"/>
<dbReference type="SignaLink" id="Q9UNK0"/>
<dbReference type="SIGNOR" id="Q9UNK0"/>
<dbReference type="BioGRID-ORCS" id="9482">
    <property type="hits" value="14 hits in 1159 CRISPR screens"/>
</dbReference>
<dbReference type="CD-CODE" id="8C2F96ED">
    <property type="entry name" value="Centrosome"/>
</dbReference>
<dbReference type="ChiTaRS" id="STX8">
    <property type="organism name" value="human"/>
</dbReference>
<dbReference type="GeneWiki" id="STX8"/>
<dbReference type="GenomeRNAi" id="9482"/>
<dbReference type="Pharos" id="Q9UNK0">
    <property type="development level" value="Tbio"/>
</dbReference>
<dbReference type="PRO" id="PR:Q9UNK0"/>
<dbReference type="Proteomes" id="UP000005640">
    <property type="component" value="Chromosome 17"/>
</dbReference>
<dbReference type="RNAct" id="Q9UNK0">
    <property type="molecule type" value="protein"/>
</dbReference>
<dbReference type="Bgee" id="ENSG00000170310">
    <property type="expression patterns" value="Expressed in sperm and 207 other cell types or tissues"/>
</dbReference>
<dbReference type="ExpressionAtlas" id="Q9UNK0">
    <property type="expression patterns" value="baseline and differential"/>
</dbReference>
<dbReference type="GO" id="GO:0005769">
    <property type="term" value="C:early endosome"/>
    <property type="evidence" value="ECO:0000314"/>
    <property type="project" value="UniProtKB"/>
</dbReference>
<dbReference type="GO" id="GO:0012505">
    <property type="term" value="C:endomembrane system"/>
    <property type="evidence" value="ECO:0000318"/>
    <property type="project" value="GO_Central"/>
</dbReference>
<dbReference type="GO" id="GO:0005783">
    <property type="term" value="C:endoplasmic reticulum"/>
    <property type="evidence" value="ECO:0000304"/>
    <property type="project" value="ProtInc"/>
</dbReference>
<dbReference type="GO" id="GO:0005768">
    <property type="term" value="C:endosome"/>
    <property type="evidence" value="ECO:0000314"/>
    <property type="project" value="UniProtKB"/>
</dbReference>
<dbReference type="GO" id="GO:0005770">
    <property type="term" value="C:late endosome"/>
    <property type="evidence" value="ECO:0000314"/>
    <property type="project" value="UniProtKB"/>
</dbReference>
<dbReference type="GO" id="GO:0048471">
    <property type="term" value="C:perinuclear region of cytoplasm"/>
    <property type="evidence" value="ECO:0000314"/>
    <property type="project" value="UniProtKB"/>
</dbReference>
<dbReference type="GO" id="GO:0045335">
    <property type="term" value="C:phagocytic vesicle"/>
    <property type="evidence" value="ECO:0007669"/>
    <property type="project" value="Ensembl"/>
</dbReference>
<dbReference type="GO" id="GO:0005886">
    <property type="term" value="C:plasma membrane"/>
    <property type="evidence" value="ECO:0000304"/>
    <property type="project" value="ProtInc"/>
</dbReference>
<dbReference type="GO" id="GO:0055037">
    <property type="term" value="C:recycling endosome"/>
    <property type="evidence" value="ECO:0000314"/>
    <property type="project" value="UniProtKB"/>
</dbReference>
<dbReference type="GO" id="GO:0031201">
    <property type="term" value="C:SNARE complex"/>
    <property type="evidence" value="ECO:0000318"/>
    <property type="project" value="GO_Central"/>
</dbReference>
<dbReference type="GO" id="GO:0005802">
    <property type="term" value="C:trans-Golgi network"/>
    <property type="evidence" value="ECO:0000314"/>
    <property type="project" value="UniProtKB"/>
</dbReference>
<dbReference type="GO" id="GO:0031982">
    <property type="term" value="C:vesicle"/>
    <property type="evidence" value="ECO:0000314"/>
    <property type="project" value="UniProtKB"/>
</dbReference>
<dbReference type="GO" id="GO:0019869">
    <property type="term" value="F:chloride channel inhibitor activity"/>
    <property type="evidence" value="ECO:0000314"/>
    <property type="project" value="UniProtKB"/>
</dbReference>
<dbReference type="GO" id="GO:0005484">
    <property type="term" value="F:SNAP receptor activity"/>
    <property type="evidence" value="ECO:0000318"/>
    <property type="project" value="GO_Central"/>
</dbReference>
<dbReference type="GO" id="GO:0000149">
    <property type="term" value="F:SNARE binding"/>
    <property type="evidence" value="ECO:0000318"/>
    <property type="project" value="GO_Central"/>
</dbReference>
<dbReference type="GO" id="GO:0019905">
    <property type="term" value="F:syntaxin binding"/>
    <property type="evidence" value="ECO:0000353"/>
    <property type="project" value="UniProtKB"/>
</dbReference>
<dbReference type="GO" id="GO:0031625">
    <property type="term" value="F:ubiquitin protein ligase binding"/>
    <property type="evidence" value="ECO:0007669"/>
    <property type="project" value="Ensembl"/>
</dbReference>
<dbReference type="GO" id="GO:0071346">
    <property type="term" value="P:cellular response to type II interferon"/>
    <property type="evidence" value="ECO:0007669"/>
    <property type="project" value="Ensembl"/>
</dbReference>
<dbReference type="GO" id="GO:0045022">
    <property type="term" value="P:early endosome to late endosome transport"/>
    <property type="evidence" value="ECO:0000314"/>
    <property type="project" value="UniProtKB"/>
</dbReference>
<dbReference type="GO" id="GO:0006886">
    <property type="term" value="P:intracellular protein transport"/>
    <property type="evidence" value="ECO:0000318"/>
    <property type="project" value="GO_Central"/>
</dbReference>
<dbReference type="GO" id="GO:1903076">
    <property type="term" value="P:regulation of protein localization to plasma membrane"/>
    <property type="evidence" value="ECO:0000314"/>
    <property type="project" value="UniProtKB"/>
</dbReference>
<dbReference type="GO" id="GO:0048278">
    <property type="term" value="P:vesicle docking"/>
    <property type="evidence" value="ECO:0000318"/>
    <property type="project" value="GO_Central"/>
</dbReference>
<dbReference type="GO" id="GO:0006906">
    <property type="term" value="P:vesicle fusion"/>
    <property type="evidence" value="ECO:0000318"/>
    <property type="project" value="GO_Central"/>
</dbReference>
<dbReference type="CDD" id="cd15852">
    <property type="entry name" value="SNARE_Syntaxin8"/>
    <property type="match status" value="1"/>
</dbReference>
<dbReference type="FunFam" id="1.20.5.110:FF:000036">
    <property type="entry name" value="Putative Syntaxin-8"/>
    <property type="match status" value="1"/>
</dbReference>
<dbReference type="Gene3D" id="1.20.5.110">
    <property type="match status" value="1"/>
</dbReference>
<dbReference type="InterPro" id="IPR045242">
    <property type="entry name" value="Syntaxin"/>
</dbReference>
<dbReference type="InterPro" id="IPR041875">
    <property type="entry name" value="Syntaxin-8_SNARE"/>
</dbReference>
<dbReference type="InterPro" id="IPR000727">
    <property type="entry name" value="T_SNARE_dom"/>
</dbReference>
<dbReference type="PANTHER" id="PTHR19957">
    <property type="entry name" value="SYNTAXIN"/>
    <property type="match status" value="1"/>
</dbReference>
<dbReference type="PANTHER" id="PTHR19957:SF124">
    <property type="entry name" value="SYNTAXIN-8"/>
    <property type="match status" value="1"/>
</dbReference>
<dbReference type="Pfam" id="PF05739">
    <property type="entry name" value="SNARE"/>
    <property type="match status" value="1"/>
</dbReference>
<dbReference type="SMART" id="SM00397">
    <property type="entry name" value="t_SNARE"/>
    <property type="match status" value="1"/>
</dbReference>
<dbReference type="SUPFAM" id="SSF58038">
    <property type="entry name" value="SNARE fusion complex"/>
    <property type="match status" value="1"/>
</dbReference>
<dbReference type="PROSITE" id="PS50192">
    <property type="entry name" value="T_SNARE"/>
    <property type="match status" value="1"/>
</dbReference>
<organism>
    <name type="scientific">Homo sapiens</name>
    <name type="common">Human</name>
    <dbReference type="NCBI Taxonomy" id="9606"/>
    <lineage>
        <taxon>Eukaryota</taxon>
        <taxon>Metazoa</taxon>
        <taxon>Chordata</taxon>
        <taxon>Craniata</taxon>
        <taxon>Vertebrata</taxon>
        <taxon>Euteleostomi</taxon>
        <taxon>Mammalia</taxon>
        <taxon>Eutheria</taxon>
        <taxon>Euarchontoglires</taxon>
        <taxon>Primates</taxon>
        <taxon>Haplorrhini</taxon>
        <taxon>Catarrhini</taxon>
        <taxon>Hominidae</taxon>
        <taxon>Homo</taxon>
    </lineage>
</organism>
<keyword id="KW-0175">Coiled coil</keyword>
<keyword id="KW-0472">Membrane</keyword>
<keyword id="KW-0597">Phosphoprotein</keyword>
<keyword id="KW-1267">Proteomics identification</keyword>
<keyword id="KW-1185">Reference proteome</keyword>
<keyword id="KW-0812">Transmembrane</keyword>
<keyword id="KW-1133">Transmembrane helix</keyword>
<keyword id="KW-0813">Transport</keyword>
<keyword id="KW-0832">Ubl conjugation</keyword>
<reference key="1">
    <citation type="journal article" date="1998" name="J. Biol. Chem.">
        <title>Three novel proteins of the syntaxin/SNAP-25 family.</title>
        <authorList>
            <person name="Steegmaier M."/>
            <person name="Yang B."/>
            <person name="Yoo J.-S."/>
            <person name="Huang B."/>
            <person name="Shen M."/>
            <person name="Yu S."/>
            <person name="Luo Y."/>
            <person name="Scheller R.H."/>
        </authorList>
    </citation>
    <scope>NUCLEOTIDE SEQUENCE [MRNA]</scope>
</reference>
<reference key="2">
    <citation type="journal article" date="1999" name="Biochem. Biophys. Res. Commun.">
        <title>Molecular cloning, expression analysis, and chromosomal localization of human syntaxin 8 (STX8).</title>
        <authorList>
            <person name="Thoreau V."/>
            <person name="Berges T."/>
            <person name="Callebaut I."/>
            <person name="Guillier-Gencik Z."/>
            <person name="Gressin L."/>
            <person name="Bernheim A."/>
            <person name="Karst F."/>
            <person name="Mornon J.-P."/>
            <person name="Kitzis A."/>
            <person name="Chomel J.-C."/>
        </authorList>
    </citation>
    <scope>NUCLEOTIDE SEQUENCE [MRNA]</scope>
    <source>
        <tissue>Lung</tissue>
    </source>
</reference>
<reference key="3">
    <citation type="submission" date="1997-12" db="EMBL/GenBank/DDBJ databases">
        <authorList>
            <person name="Subramaniam V.N."/>
            <person name="Loh E."/>
            <person name="Hong W."/>
        </authorList>
    </citation>
    <scope>NUCLEOTIDE SEQUENCE [MRNA]</scope>
</reference>
<reference key="4">
    <citation type="submission" date="2003-05" db="EMBL/GenBank/DDBJ databases">
        <title>Cloning of human full-length CDSs in BD Creator(TM) system donor vector.</title>
        <authorList>
            <person name="Kalnine N."/>
            <person name="Chen X."/>
            <person name="Rolfs A."/>
            <person name="Halleck A."/>
            <person name="Hines L."/>
            <person name="Eisenstein S."/>
            <person name="Koundinya M."/>
            <person name="Raphael J."/>
            <person name="Moreira D."/>
            <person name="Kelley T."/>
            <person name="LaBaer J."/>
            <person name="Lin Y."/>
            <person name="Phelan M."/>
            <person name="Farmer A."/>
        </authorList>
    </citation>
    <scope>NUCLEOTIDE SEQUENCE [LARGE SCALE MRNA]</scope>
</reference>
<reference key="5">
    <citation type="submission" date="2005-09" db="EMBL/GenBank/DDBJ databases">
        <authorList>
            <person name="Mural R.J."/>
            <person name="Istrail S."/>
            <person name="Sutton G.G."/>
            <person name="Florea L."/>
            <person name="Halpern A.L."/>
            <person name="Mobarry C.M."/>
            <person name="Lippert R."/>
            <person name="Walenz B."/>
            <person name="Shatkay H."/>
            <person name="Dew I."/>
            <person name="Miller J.R."/>
            <person name="Flanigan M.J."/>
            <person name="Edwards N.J."/>
            <person name="Bolanos R."/>
            <person name="Fasulo D."/>
            <person name="Halldorsson B.V."/>
            <person name="Hannenhalli S."/>
            <person name="Turner R."/>
            <person name="Yooseph S."/>
            <person name="Lu F."/>
            <person name="Nusskern D.R."/>
            <person name="Shue B.C."/>
            <person name="Zheng X.H."/>
            <person name="Zhong F."/>
            <person name="Delcher A.L."/>
            <person name="Huson D.H."/>
            <person name="Kravitz S.A."/>
            <person name="Mouchard L."/>
            <person name="Reinert K."/>
            <person name="Remington K.A."/>
            <person name="Clark A.G."/>
            <person name="Waterman M.S."/>
            <person name="Eichler E.E."/>
            <person name="Adams M.D."/>
            <person name="Hunkapiller M.W."/>
            <person name="Myers E.W."/>
            <person name="Venter J.C."/>
        </authorList>
    </citation>
    <scope>NUCLEOTIDE SEQUENCE [LARGE SCALE GENOMIC DNA]</scope>
</reference>
<reference key="6">
    <citation type="journal article" date="2004" name="Genome Res.">
        <title>The status, quality, and expansion of the NIH full-length cDNA project: the Mammalian Gene Collection (MGC).</title>
        <authorList>
            <consortium name="The MGC Project Team"/>
        </authorList>
    </citation>
    <scope>NUCLEOTIDE SEQUENCE [LARGE SCALE MRNA]</scope>
    <source>
        <tissue>Pancreas</tissue>
    </source>
</reference>
<reference key="7">
    <citation type="journal article" date="2011" name="BMC Syst. Biol.">
        <title>Initial characterization of the human central proteome.</title>
        <authorList>
            <person name="Burkard T.R."/>
            <person name="Planyavsky M."/>
            <person name="Kaupe I."/>
            <person name="Breitwieser F.P."/>
            <person name="Buerckstuemmer T."/>
            <person name="Bennett K.L."/>
            <person name="Superti-Furga G."/>
            <person name="Colinge J."/>
        </authorList>
    </citation>
    <scope>IDENTIFICATION BY MASS SPECTROMETRY [LARGE SCALE ANALYSIS]</scope>
</reference>
<reference key="8">
    <citation type="journal article" date="2015" name="Proteomics">
        <title>N-terminome analysis of the human mitochondrial proteome.</title>
        <authorList>
            <person name="Vaca Jacome A.S."/>
            <person name="Rabilloud T."/>
            <person name="Schaeffer-Reiss C."/>
            <person name="Rompais M."/>
            <person name="Ayoub D."/>
            <person name="Lane L."/>
            <person name="Bairoch A."/>
            <person name="Van Dorsselaer A."/>
            <person name="Carapito C."/>
        </authorList>
    </citation>
    <scope>IDENTIFICATION BY MASS SPECTROMETRY [LARGE SCALE ANALYSIS]</scope>
</reference>
<name>STX8_HUMAN</name>
<gene>
    <name type="primary">STX8</name>
</gene>
<feature type="chain" id="PRO_0000210217" description="Syntaxin-8">
    <location>
        <begin position="1"/>
        <end position="236"/>
    </location>
</feature>
<feature type="topological domain" description="Cytoplasmic" evidence="3">
    <location>
        <begin position="1"/>
        <end position="215"/>
    </location>
</feature>
<feature type="transmembrane region" description="Helical; Anchor for type IV membrane protein" evidence="3">
    <location>
        <begin position="216"/>
        <end position="232"/>
    </location>
</feature>
<feature type="topological domain" description="Vesicular" evidence="3">
    <location>
        <begin position="233"/>
        <end position="236"/>
    </location>
</feature>
<feature type="domain" description="t-SNARE coiled-coil homology" evidence="4">
    <location>
        <begin position="145"/>
        <end position="207"/>
    </location>
</feature>
<feature type="coiled-coil region" evidence="3">
    <location>
        <begin position="42"/>
        <end position="65"/>
    </location>
</feature>
<feature type="modified residue" description="Phosphoserine" evidence="2">
    <location>
        <position position="160"/>
    </location>
</feature>
<feature type="sequence conflict" description="In Ref. 1; AAD20831." evidence="5" ref="1">
    <original>R</original>
    <variation>Q</variation>
    <location>
        <position position="78"/>
    </location>
</feature>
<accession>Q9UNK0</accession>
<accession>O60712</accession>
<accession>Q53XT8</accession>
<sequence>MAPDPWFSTYDSTCQIAQEIAEKIQQRNQYERKGEKAPKLTVTIRALLQNLKEKIALLKDLLLRAVSTHQITQLEGDRRQNLLDDLVTRERLLLASFKNEGAEPDLIRSSLMSEEAKRGAPNPWLFEEPEETRGLGFDEIRQQQQKIIQEQDAGLDALSSIISRQKQMGQEIGNELDEQNEIIDDLANLVENTDEKLRNETRRVNMVDRKSASCGMIMVILLLLVAIVVVAVWPTN</sequence>
<comment type="function">
    <text>Vesicle trafficking protein that functions in the early secretory pathway, possibly by mediating retrograde transport from cis-Golgi membranes to the ER.</text>
</comment>
<comment type="subunit">
    <text evidence="1 2">Forms a SNARE complex with STX7, VTI1B and VAMP8 which functions in the homotypic fusion of late endosomes. Part of the SNARE core complex containing STX7, VAMP8 and VTI1B. Interacts with VAMP8 (By similarity). Interacts with HECTD3 (By similarity). Interacts with TPC1 (By similarity).</text>
</comment>
<comment type="interaction">
    <interactant intactId="EBI-727240">
        <id>Q9UNK0</id>
    </interactant>
    <interactant intactId="EBI-19125216">
        <id>Q86WK6</id>
        <label>AMIGO1</label>
    </interactant>
    <organismsDiffer>false</organismsDiffer>
    <experiments>3</experiments>
</comment>
<comment type="interaction">
    <interactant intactId="EBI-727240">
        <id>Q9UNK0</id>
    </interactant>
    <interactant intactId="EBI-12808270">
        <id>P07307-3</id>
        <label>ASGR2</label>
    </interactant>
    <organismsDiffer>false</organismsDiffer>
    <experiments>3</experiments>
</comment>
<comment type="interaction">
    <interactant intactId="EBI-727240">
        <id>Q9UNK0</id>
    </interactant>
    <interactant intactId="EBI-747430">
        <id>Q9BXK5</id>
        <label>BCL2L13</label>
    </interactant>
    <organismsDiffer>false</organismsDiffer>
    <experiments>3</experiments>
</comment>
<comment type="interaction">
    <interactant intactId="EBI-727240">
        <id>Q9UNK0</id>
    </interactant>
    <interactant intactId="EBI-700794">
        <id>Q13323</id>
        <label>BIK</label>
    </interactant>
    <organismsDiffer>false</organismsDiffer>
    <experiments>3</experiments>
</comment>
<comment type="interaction">
    <interactant intactId="EBI-727240">
        <id>Q9UNK0</id>
    </interactant>
    <interactant intactId="EBI-7996695">
        <id>Q8WZ55</id>
        <label>BSND</label>
    </interactant>
    <organismsDiffer>false</organismsDiffer>
    <experiments>3</experiments>
</comment>
<comment type="interaction">
    <interactant intactId="EBI-727240">
        <id>Q9UNK0</id>
    </interactant>
    <interactant intactId="EBI-18010148">
        <id>Q496F6</id>
        <label>CD300E</label>
    </interactant>
    <organismsDiffer>false</organismsDiffer>
    <experiments>3</experiments>
</comment>
<comment type="interaction">
    <interactant intactId="EBI-727240">
        <id>Q9UNK0</id>
    </interactant>
    <interactant intactId="EBI-7797864">
        <id>P11912</id>
        <label>CD79A</label>
    </interactant>
    <organismsDiffer>false</organismsDiffer>
    <experiments>3</experiments>
</comment>
<comment type="interaction">
    <interactant intactId="EBI-727240">
        <id>Q9UNK0</id>
    </interactant>
    <interactant intactId="EBI-2622997">
        <id>Q9HA82</id>
        <label>CERS4</label>
    </interactant>
    <organismsDiffer>false</organismsDiffer>
    <experiments>3</experiments>
</comment>
<comment type="interaction">
    <interactant intactId="EBI-727240">
        <id>Q9UNK0</id>
    </interactant>
    <interactant intactId="EBI-18341636">
        <id>O95484</id>
        <label>CLDN9</label>
    </interactant>
    <organismsDiffer>false</organismsDiffer>
    <experiments>3</experiments>
</comment>
<comment type="interaction">
    <interactant intactId="EBI-727240">
        <id>Q9UNK0</id>
    </interactant>
    <interactant intactId="EBI-18013275">
        <id>Q7Z7G2</id>
        <label>CPLX4</label>
    </interactant>
    <organismsDiffer>false</organismsDiffer>
    <experiments>3</experiments>
</comment>
<comment type="interaction">
    <interactant intactId="EBI-727240">
        <id>Q9UNK0</id>
    </interactant>
    <interactant intactId="EBI-6942903">
        <id>Q96BA8</id>
        <label>CREB3L1</label>
    </interactant>
    <organismsDiffer>false</organismsDiffer>
    <experiments>5</experiments>
</comment>
<comment type="interaction">
    <interactant intactId="EBI-727240">
        <id>Q9UNK0</id>
    </interactant>
    <interactant intactId="EBI-19157435">
        <id>Q9BPW9-4</id>
        <label>DHRS9</label>
    </interactant>
    <organismsDiffer>false</organismsDiffer>
    <experiments>3</experiments>
</comment>
<comment type="interaction">
    <interactant intactId="EBI-727240">
        <id>Q9UNK0</id>
    </interactant>
    <interactant intactId="EBI-3915253">
        <id>Q15125</id>
        <label>EBP</label>
    </interactant>
    <organismsDiffer>false</organismsDiffer>
    <experiments>3</experiments>
</comment>
<comment type="interaction">
    <interactant intactId="EBI-727240">
        <id>Q9UNK0</id>
    </interactant>
    <interactant intactId="EBI-781551">
        <id>Q9Y282</id>
        <label>ERGIC3</label>
    </interactant>
    <organismsDiffer>false</organismsDiffer>
    <experiments>3</experiments>
</comment>
<comment type="interaction">
    <interactant intactId="EBI-727240">
        <id>Q9UNK0</id>
    </interactant>
    <interactant intactId="EBI-18636064">
        <id>Q8TBP5</id>
        <label>FAM174A</label>
    </interactant>
    <organismsDiffer>false</organismsDiffer>
    <experiments>3</experiments>
</comment>
<comment type="interaction">
    <interactant intactId="EBI-727240">
        <id>Q9UNK0</id>
    </interactant>
    <interactant intactId="EBI-18304435">
        <id>Q5JX71</id>
        <label>FAM209A</label>
    </interactant>
    <organismsDiffer>false</organismsDiffer>
    <experiments>3</experiments>
</comment>
<comment type="interaction">
    <interactant intactId="EBI-727240">
        <id>Q9UNK0</id>
    </interactant>
    <interactant intactId="EBI-2833872">
        <id>O15552</id>
        <label>FFAR2</label>
    </interactant>
    <organismsDiffer>false</organismsDiffer>
    <experiments>3</experiments>
</comment>
<comment type="interaction">
    <interactant intactId="EBI-727240">
        <id>Q9UNK0</id>
    </interactant>
    <interactant intactId="EBI-3918971">
        <id>Q9Y680</id>
        <label>FKBP7</label>
    </interactant>
    <organismsDiffer>false</organismsDiffer>
    <experiments>3</experiments>
</comment>
<comment type="interaction">
    <interactant intactId="EBI-727240">
        <id>Q9UNK0</id>
    </interactant>
    <interactant intactId="EBI-12142257">
        <id>Q8TBE3</id>
        <label>FNDC9</label>
    </interactant>
    <organismsDiffer>false</organismsDiffer>
    <experiments>3</experiments>
</comment>
<comment type="interaction">
    <interactant intactId="EBI-727240">
        <id>Q9UNK0</id>
    </interactant>
    <interactant intactId="EBI-17458373">
        <id>P48165</id>
        <label>GJA8</label>
    </interactant>
    <organismsDiffer>false</organismsDiffer>
    <experiments>3</experiments>
</comment>
<comment type="interaction">
    <interactant intactId="EBI-727240">
        <id>Q9UNK0</id>
    </interactant>
    <interactant intactId="EBI-17565645">
        <id>P08034</id>
        <label>GJB1</label>
    </interactant>
    <organismsDiffer>false</organismsDiffer>
    <experiments>3</experiments>
</comment>
<comment type="interaction">
    <interactant intactId="EBI-727240">
        <id>Q9UNK0</id>
    </interactant>
    <interactant intactId="EBI-3917143">
        <id>Q5T7V8</id>
        <label>GORAB</label>
    </interactant>
    <organismsDiffer>false</organismsDiffer>
    <experiments>3</experiments>
</comment>
<comment type="interaction">
    <interactant intactId="EBI-727240">
        <id>Q9UNK0</id>
    </interactant>
    <interactant intactId="EBI-11955647">
        <id>Q8TDV0</id>
        <label>GPR151</label>
    </interactant>
    <organismsDiffer>false</organismsDiffer>
    <experiments>3</experiments>
</comment>
<comment type="interaction">
    <interactant intactId="EBI-727240">
        <id>Q9UNK0</id>
    </interactant>
    <interactant intactId="EBI-13345167">
        <id>Q8TDT2</id>
        <label>GPR152</label>
    </interactant>
    <organismsDiffer>false</organismsDiffer>
    <experiments>3</experiments>
</comment>
<comment type="interaction">
    <interactant intactId="EBI-727240">
        <id>Q9UNK0</id>
    </interactant>
    <interactant intactId="EBI-18076404">
        <id>O15529</id>
        <label>GPR42</label>
    </interactant>
    <organismsDiffer>false</organismsDiffer>
    <experiments>3</experiments>
</comment>
<comment type="interaction">
    <interactant intactId="EBI-727240">
        <id>Q9UNK0</id>
    </interactant>
    <interactant intactId="EBI-11721746">
        <id>Q8TED1</id>
        <label>GPX8</label>
    </interactant>
    <organismsDiffer>false</organismsDiffer>
    <experiments>3</experiments>
</comment>
<comment type="interaction">
    <interactant intactId="EBI-727240">
        <id>Q9UNK0</id>
    </interactant>
    <interactant intactId="EBI-10266796">
        <id>Q8N5M9</id>
        <label>JAGN1</label>
    </interactant>
    <organismsDiffer>false</organismsDiffer>
    <experiments>3</experiments>
</comment>
<comment type="interaction">
    <interactant intactId="EBI-727240">
        <id>Q9UNK0</id>
    </interactant>
    <interactant intactId="EBI-11305455">
        <id>Q96MG2</id>
        <label>JSRP1</label>
    </interactant>
    <organismsDiffer>false</organismsDiffer>
    <experiments>5</experiments>
</comment>
<comment type="interaction">
    <interactant intactId="EBI-727240">
        <id>Q9UNK0</id>
    </interactant>
    <interactant intactId="EBI-17703887">
        <id>Q16558-2</id>
        <label>KCNMB1</label>
    </interactant>
    <organismsDiffer>false</organismsDiffer>
    <experiments>3</experiments>
</comment>
<comment type="interaction">
    <interactant intactId="EBI-727240">
        <id>Q9UNK0</id>
    </interactant>
    <interactant intactId="EBI-10292326">
        <id>Q96PE7</id>
        <label>MCEE</label>
    </interactant>
    <organismsDiffer>false</organismsDiffer>
    <experiments>3</experiments>
</comment>
<comment type="interaction">
    <interactant intactId="EBI-727240">
        <id>Q9UNK0</id>
    </interactant>
    <interactant intactId="EBI-1003422">
        <id>Q07820</id>
        <label>MCL1</label>
    </interactant>
    <organismsDiffer>false</organismsDiffer>
    <experiments>3</experiments>
</comment>
<comment type="interaction">
    <interactant intactId="EBI-727240">
        <id>Q9UNK0</id>
    </interactant>
    <interactant intactId="EBI-11956541">
        <id>Q9GZY8-5</id>
        <label>MFF</label>
    </interactant>
    <organismsDiffer>false</organismsDiffer>
    <experiments>3</experiments>
</comment>
<comment type="interaction">
    <interactant intactId="EBI-727240">
        <id>Q9UNK0</id>
    </interactant>
    <interactant intactId="EBI-11324706">
        <id>Q99735</id>
        <label>MGST2</label>
    </interactant>
    <organismsDiffer>false</organismsDiffer>
    <experiments>3</experiments>
</comment>
<comment type="interaction">
    <interactant intactId="EBI-727240">
        <id>Q9UNK0</id>
    </interactant>
    <interactant intactId="EBI-724754">
        <id>O14880</id>
        <label>MGST3</label>
    </interactant>
    <organismsDiffer>false</organismsDiffer>
    <experiments>3</experiments>
</comment>
<comment type="interaction">
    <interactant intactId="EBI-727240">
        <id>Q9UNK0</id>
    </interactant>
    <interactant intactId="EBI-6163737">
        <id>Q8N4V1</id>
        <label>MMGT1</label>
    </interactant>
    <organismsDiffer>false</organismsDiffer>
    <experiments>3</experiments>
</comment>
<comment type="interaction">
    <interactant intactId="EBI-727240">
        <id>Q9UNK0</id>
    </interactant>
    <interactant intactId="EBI-12806656">
        <id>Q96HJ5</id>
        <label>MS4A3</label>
    </interactant>
    <organismsDiffer>false</organismsDiffer>
    <experiments>3</experiments>
</comment>
<comment type="interaction">
    <interactant intactId="EBI-727240">
        <id>Q9UNK0</id>
    </interactant>
    <interactant intactId="EBI-7825321">
        <id>Q96E29</id>
        <label>MTERF3</label>
    </interactant>
    <organismsDiffer>false</organismsDiffer>
    <experiments>3</experiments>
</comment>
<comment type="interaction">
    <interactant intactId="EBI-727240">
        <id>Q9UNK0</id>
    </interactant>
    <interactant intactId="EBI-14061804">
        <id>Q68D85</id>
        <label>NCR3LG1</label>
    </interactant>
    <organismsDiffer>false</organismsDiffer>
    <experiments>3</experiments>
</comment>
<comment type="interaction">
    <interactant intactId="EBI-727240">
        <id>Q9UNK0</id>
    </interactant>
    <interactant intactId="EBI-741874">
        <id>Q9Y375</id>
        <label>NDUFAF1</label>
    </interactant>
    <organismsDiffer>false</organismsDiffer>
    <experiments>3</experiments>
</comment>
<comment type="interaction">
    <interactant intactId="EBI-727240">
        <id>Q9UNK0</id>
    </interactant>
    <interactant intactId="EBI-2682365">
        <id>Q8N183</id>
        <label>NDUFAF2</label>
    </interactant>
    <organismsDiffer>false</organismsDiffer>
    <experiments>3</experiments>
</comment>
<comment type="interaction">
    <interactant intactId="EBI-727240">
        <id>Q9UNK0</id>
    </interactant>
    <interactant intactId="EBI-594836">
        <id>O00623</id>
        <label>PEX12</label>
    </interactant>
    <organismsDiffer>false</organismsDiffer>
    <experiments>3</experiments>
</comment>
<comment type="interaction">
    <interactant intactId="EBI-727240">
        <id>Q9UNK0</id>
    </interactant>
    <interactant intactId="EBI-10192441">
        <id>Q86VR2</id>
        <label>RETREG3</label>
    </interactant>
    <organismsDiffer>false</organismsDiffer>
    <experiments>5</experiments>
</comment>
<comment type="interaction">
    <interactant intactId="EBI-727240">
        <id>Q9UNK0</id>
    </interactant>
    <interactant intactId="EBI-18397230">
        <id>Q6P5S7</id>
        <label>RNASEK</label>
    </interactant>
    <organismsDiffer>false</organismsDiffer>
    <experiments>3</experiments>
</comment>
<comment type="interaction">
    <interactant intactId="EBI-727240">
        <id>Q9UNK0</id>
    </interactant>
    <interactant intactId="EBI-3920694">
        <id>Q9NR31</id>
        <label>SAR1A</label>
    </interactant>
    <organismsDiffer>false</organismsDiffer>
    <experiments>3</experiments>
</comment>
<comment type="interaction">
    <interactant intactId="EBI-727240">
        <id>Q9UNK0</id>
    </interactant>
    <interactant intactId="EBI-17247926">
        <id>Q9NY72</id>
        <label>SCN3B</label>
    </interactant>
    <organismsDiffer>false</organismsDiffer>
    <experiments>3</experiments>
</comment>
<comment type="interaction">
    <interactant intactId="EBI-727240">
        <id>Q9UNK0</id>
    </interactant>
    <interactant intactId="EBI-1046170">
        <id>O95470</id>
        <label>SGPL1</label>
    </interactant>
    <organismsDiffer>false</organismsDiffer>
    <experiments>3</experiments>
</comment>
<comment type="interaction">
    <interactant intactId="EBI-727240">
        <id>Q9UNK0</id>
    </interactant>
    <interactant intactId="EBI-18159983">
        <id>Q3KNW5</id>
        <label>SLC10A6</label>
    </interactant>
    <organismsDiffer>false</organismsDiffer>
    <experiments>3</experiments>
</comment>
<comment type="interaction">
    <interactant intactId="EBI-727240">
        <id>Q9UNK0</id>
    </interactant>
    <interactant intactId="EBI-17595455">
        <id>P54219-3</id>
        <label>SLC18A1</label>
    </interactant>
    <organismsDiffer>false</organismsDiffer>
    <experiments>3</experiments>
</comment>
<comment type="interaction">
    <interactant intactId="EBI-727240">
        <id>Q9UNK0</id>
    </interactant>
    <interactant intactId="EBI-17280858">
        <id>Q8WWF3</id>
        <label>SSMEM1</label>
    </interactant>
    <organismsDiffer>false</organismsDiffer>
    <experiments>3</experiments>
</comment>
<comment type="interaction">
    <interactant intactId="EBI-727240">
        <id>Q9UNK0</id>
    </interactant>
    <interactant intactId="EBI-722932">
        <id>P49675</id>
        <label>STAR</label>
    </interactant>
    <organismsDiffer>false</organismsDiffer>
    <experiments>3</experiments>
</comment>
<comment type="interaction">
    <interactant intactId="EBI-727240">
        <id>Q9UNK0</id>
    </interactant>
    <interactant intactId="EBI-20117546">
        <id>Q9H169-2</id>
        <label>STMN4</label>
    </interactant>
    <organismsDiffer>false</organismsDiffer>
    <experiments>3</experiments>
</comment>
<comment type="interaction">
    <interactant intactId="EBI-727240">
        <id>Q9UNK0</id>
    </interactant>
    <interactant intactId="EBI-712466">
        <id>Q16623</id>
        <label>STX1A</label>
    </interactant>
    <organismsDiffer>false</organismsDiffer>
    <experiments>3</experiments>
</comment>
<comment type="interaction">
    <interactant intactId="EBI-727240">
        <id>Q9UNK0</id>
    </interactant>
    <interactant intactId="EBI-11956649">
        <id>P32856-2</id>
        <label>STX2</label>
    </interactant>
    <organismsDiffer>false</organismsDiffer>
    <experiments>3</experiments>
</comment>
<comment type="interaction">
    <interactant intactId="EBI-727240">
        <id>Q9UNK0</id>
    </interactant>
    <interactant intactId="EBI-744942">
        <id>Q12846</id>
        <label>STX4</label>
    </interactant>
    <organismsDiffer>false</organismsDiffer>
    <experiments>8</experiments>
</comment>
<comment type="interaction">
    <interactant intactId="EBI-727240">
        <id>Q9UNK0</id>
    </interactant>
    <interactant intactId="EBI-714206">
        <id>Q13190</id>
        <label>STX5</label>
    </interactant>
    <organismsDiffer>false</organismsDiffer>
    <experiments>6</experiments>
</comment>
<comment type="interaction">
    <interactant intactId="EBI-727240">
        <id>Q9UNK0</id>
    </interactant>
    <interactant intactId="EBI-11603430">
        <id>Q6PL24</id>
        <label>TMED8</label>
    </interactant>
    <organismsDiffer>false</organismsDiffer>
    <experiments>4</experiments>
</comment>
<comment type="interaction">
    <interactant intactId="EBI-727240">
        <id>Q9UNK0</id>
    </interactant>
    <interactant intactId="EBI-8638294">
        <id>Q9NUH8</id>
        <label>TMEM14B</label>
    </interactant>
    <organismsDiffer>false</organismsDiffer>
    <experiments>3</experiments>
</comment>
<comment type="interaction">
    <interactant intactId="EBI-727240">
        <id>Q9UNK0</id>
    </interactant>
    <interactant intactId="EBI-11724423">
        <id>Q7Z7N9</id>
        <label>TMEM179B</label>
    </interactant>
    <organismsDiffer>false</organismsDiffer>
    <experiments>3</experiments>
</comment>
<comment type="interaction">
    <interactant intactId="EBI-727240">
        <id>Q9UNK0</id>
    </interactant>
    <interactant intactId="EBI-6269551">
        <id>Q6UW68</id>
        <label>TMEM205</label>
    </interactant>
    <organismsDiffer>false</organismsDiffer>
    <experiments>3</experiments>
</comment>
<comment type="interaction">
    <interactant intactId="EBI-727240">
        <id>Q9UNK0</id>
    </interactant>
    <interactant intactId="EBI-10982110">
        <id>Q96Q45-2</id>
        <label>TMEM237</label>
    </interactant>
    <organismsDiffer>false</organismsDiffer>
    <experiments>3</experiments>
</comment>
<comment type="interaction">
    <interactant intactId="EBI-727240">
        <id>Q9UNK0</id>
    </interactant>
    <interactant intactId="EBI-2548832">
        <id>Q8N661</id>
        <label>TMEM86B</label>
    </interactant>
    <organismsDiffer>false</organismsDiffer>
    <experiments>3</experiments>
</comment>
<comment type="interaction">
    <interactant intactId="EBI-727240">
        <id>Q9UNK0</id>
    </interactant>
    <interactant intactId="EBI-11724433">
        <id>Q6ZT21</id>
        <label>TMPPE</label>
    </interactant>
    <organismsDiffer>false</organismsDiffer>
    <experiments>3</experiments>
</comment>
<comment type="interaction">
    <interactant intactId="EBI-727240">
        <id>Q9UNK0</id>
    </interactant>
    <interactant intactId="EBI-12345267">
        <id>O15393-2</id>
        <label>TMPRSS2</label>
    </interactant>
    <organismsDiffer>false</organismsDiffer>
    <experiments>3</experiments>
</comment>
<comment type="interaction">
    <interactant intactId="EBI-727240">
        <id>Q9UNK0</id>
    </interactant>
    <interactant intactId="EBI-2466403">
        <id>O95859</id>
        <label>TSPAN12</label>
    </interactant>
    <organismsDiffer>false</organismsDiffer>
    <experiments>3</experiments>
</comment>
<comment type="interaction">
    <interactant intactId="EBI-727240">
        <id>Q9UNK0</id>
    </interactant>
    <interactant intactId="EBI-10191195">
        <id>O95183</id>
        <label>VAMP5</label>
    </interactant>
    <organismsDiffer>false</organismsDiffer>
    <experiments>6</experiments>
</comment>
<comment type="interaction">
    <interactant intactId="EBI-727240">
        <id>Q9UNK0</id>
    </interactant>
    <interactant intactId="EBI-723716">
        <id>Q9UEU0</id>
        <label>VTI1B</label>
    </interactant>
    <organismsDiffer>false</organismsDiffer>
    <experiments>12</experiments>
</comment>
<comment type="subcellular location">
    <subcellularLocation>
        <location evidence="1">Membrane</location>
        <topology evidence="1">Single-pass type IV membrane protein</topology>
    </subcellularLocation>
    <text evidence="1">Preferentially associated with the early endosome. To a lesser extent, also present in late endosome, the plasma membrane and coated pits (By similarity).</text>
</comment>
<comment type="tissue specificity">
    <text>Highly expressed in heart. Also found in brain, kidney, liver, lung, placenta, skeletal muscle, spleen and pancreas.</text>
</comment>
<comment type="PTM">
    <text evidence="1">Ubiquitinated by HECTD3.</text>
</comment>
<comment type="similarity">
    <text evidence="5">Belongs to the syntaxin family.</text>
</comment>
<proteinExistence type="evidence at protein level"/>